<name>YR224_MIMIV</name>
<accession>Q5UQB7</accession>
<sequence>MDHLNLCRYLTESILTDLELTLIDENENTLVINVHKLILSINCQYFETLFSGQFIDSQKNNLKLLVPDIHVVRDIIYGFYKNPIKYKNYPDWLYELKKIVCQNFLCLETNIEILHNIIVPTNGFDKLLDTIDLIGYDSDTISLLVGNMPDNYDLTKLPIELIRQMFDVPMFNMIYVSDKDGTFKIGNGNISFNITSNTLINNGHFEFSSIHNKIIYHHVCDIYVYDLLNYTTNKFTNPISHTIKSIVLTPDQEYIIYDSSPQIISKFDFISMEIIESRFAPTGAVVNDIFSSTELGHFGKIEELQCCNPNLLIIGSNVLSFYNVNDMLLMNIIENNIIPNDLYGRIYSSSIKKGRIFVSLLNDIIFVLSSINMYFIKPDTYEYIKKIHCNNFYNHDYCATNNDFWDICNINQDVIAILVGNLLTIYNWKLDKTIIQIDICHTECNGSYCKIDKIVYDSTTKLLFVDCSNSRSGKKIYSILMDNIDLNIPINNVDFSIFSKNKIMRYGNPKCISGIKKFKIIDNYKSKLYNNIEKYLKNNQ</sequence>
<dbReference type="EMBL" id="AY653733">
    <property type="protein sequence ID" value="AAV50497.1"/>
    <property type="molecule type" value="Genomic_DNA"/>
</dbReference>
<dbReference type="KEGG" id="vg:9924831"/>
<dbReference type="OrthoDB" id="7868at10239"/>
<dbReference type="Proteomes" id="UP000001134">
    <property type="component" value="Genome"/>
</dbReference>
<dbReference type="GO" id="GO:0016020">
    <property type="term" value="C:membrane"/>
    <property type="evidence" value="ECO:0007669"/>
    <property type="project" value="UniProtKB-SubCell"/>
</dbReference>
<dbReference type="CDD" id="cd18186">
    <property type="entry name" value="BTB_POZ_ZBTB_KLHL-like"/>
    <property type="match status" value="1"/>
</dbReference>
<dbReference type="Gene3D" id="3.30.710.10">
    <property type="entry name" value="Potassium Channel Kv1.1, Chain A"/>
    <property type="match status" value="1"/>
</dbReference>
<dbReference type="InterPro" id="IPR000210">
    <property type="entry name" value="BTB/POZ_dom"/>
</dbReference>
<dbReference type="InterPro" id="IPR011333">
    <property type="entry name" value="SKP1/BTB/POZ_sf"/>
</dbReference>
<dbReference type="Pfam" id="PF00651">
    <property type="entry name" value="BTB"/>
    <property type="match status" value="1"/>
</dbReference>
<dbReference type="SUPFAM" id="SSF54695">
    <property type="entry name" value="POZ domain"/>
    <property type="match status" value="1"/>
</dbReference>
<dbReference type="PROSITE" id="PS50097">
    <property type="entry name" value="BTB"/>
    <property type="match status" value="1"/>
</dbReference>
<organismHost>
    <name type="scientific">Acanthamoeba polyphaga</name>
    <name type="common">Amoeba</name>
    <dbReference type="NCBI Taxonomy" id="5757"/>
</organismHost>
<protein>
    <recommendedName>
        <fullName>Putative BTB/POZ domain-containing protein R224</fullName>
    </recommendedName>
</protein>
<proteinExistence type="inferred from homology"/>
<evidence type="ECO:0000255" key="1"/>
<evidence type="ECO:0000255" key="2">
    <source>
        <dbReference type="PROSITE-ProRule" id="PRU00037"/>
    </source>
</evidence>
<evidence type="ECO:0000305" key="3"/>
<reference key="1">
    <citation type="journal article" date="2004" name="Science">
        <title>The 1.2-megabase genome sequence of Mimivirus.</title>
        <authorList>
            <person name="Raoult D."/>
            <person name="Audic S."/>
            <person name="Robert C."/>
            <person name="Abergel C."/>
            <person name="Renesto P."/>
            <person name="Ogata H."/>
            <person name="La Scola B."/>
            <person name="Susan M."/>
            <person name="Claverie J.-M."/>
        </authorList>
    </citation>
    <scope>NUCLEOTIDE SEQUENCE [LARGE SCALE GENOMIC DNA]</scope>
    <source>
        <strain>Rowbotham-Bradford</strain>
    </source>
</reference>
<keyword id="KW-0472">Membrane</keyword>
<keyword id="KW-1185">Reference proteome</keyword>
<keyword id="KW-0812">Transmembrane</keyword>
<keyword id="KW-1133">Transmembrane helix</keyword>
<organism>
    <name type="scientific">Acanthamoeba polyphaga mimivirus</name>
    <name type="common">APMV</name>
    <dbReference type="NCBI Taxonomy" id="212035"/>
    <lineage>
        <taxon>Viruses</taxon>
        <taxon>Varidnaviria</taxon>
        <taxon>Bamfordvirae</taxon>
        <taxon>Nucleocytoviricota</taxon>
        <taxon>Megaviricetes</taxon>
        <taxon>Imitervirales</taxon>
        <taxon>Mimiviridae</taxon>
        <taxon>Megamimivirinae</taxon>
        <taxon>Mimivirus</taxon>
        <taxon>Mimivirus bradfordmassiliense</taxon>
    </lineage>
</organism>
<feature type="chain" id="PRO_0000186230" description="Putative BTB/POZ domain-containing protein R224">
    <location>
        <begin position="1"/>
        <end position="540"/>
    </location>
</feature>
<feature type="transmembrane region" description="Helical" evidence="1">
    <location>
        <begin position="356"/>
        <end position="376"/>
    </location>
</feature>
<feature type="domain" description="BTB" evidence="2">
    <location>
        <begin position="16"/>
        <end position="88"/>
    </location>
</feature>
<comment type="subcellular location">
    <subcellularLocation>
        <location evidence="3">Membrane</location>
        <topology evidence="3">Single-pass membrane protein</topology>
    </subcellularLocation>
</comment>
<comment type="similarity">
    <text evidence="3">Belongs to the mimivirus BTB/WD family.</text>
</comment>
<gene>
    <name type="ordered locus">MIMI_R224</name>
</gene>